<accession>Q9UWN6</accession>
<accession>Q4JAE6</accession>
<reference key="1">
    <citation type="journal article" date="2000" name="J. Biol. Chem.">
        <title>The role of transcription factor B in transcription initiation and promoter clearance in the archaeon Sulfolobus acidocaldarius.</title>
        <authorList>
            <person name="Bell S.D."/>
            <person name="Jackson S.P."/>
        </authorList>
    </citation>
    <scope>NUCLEOTIDE SEQUENCE [GENOMIC DNA]</scope>
</reference>
<reference key="2">
    <citation type="journal article" date="2005" name="J. Bacteriol.">
        <title>The genome of Sulfolobus acidocaldarius, a model organism of the Crenarchaeota.</title>
        <authorList>
            <person name="Chen L."/>
            <person name="Bruegger K."/>
            <person name="Skovgaard M."/>
            <person name="Redder P."/>
            <person name="She Q."/>
            <person name="Torarinsson E."/>
            <person name="Greve B."/>
            <person name="Awayez M."/>
            <person name="Zibat A."/>
            <person name="Klenk H.-P."/>
            <person name="Garrett R.A."/>
        </authorList>
    </citation>
    <scope>NUCLEOTIDE SEQUENCE [LARGE SCALE GENOMIC DNA]</scope>
    <source>
        <strain>ATCC 33909 / DSM 639 / JCM 8929 / NBRC 15157 / NCIMB 11770</strain>
    </source>
</reference>
<gene>
    <name evidence="1" type="primary">tfb</name>
    <name type="synonym">tifB</name>
    <name type="ordered locus">Saci_0866</name>
</gene>
<dbReference type="EMBL" id="AF205429">
    <property type="protein sequence ID" value="AAF18139.1"/>
    <property type="molecule type" value="Genomic_DNA"/>
</dbReference>
<dbReference type="EMBL" id="CP000077">
    <property type="protein sequence ID" value="AAY80233.1"/>
    <property type="status" value="ALT_INIT"/>
    <property type="molecule type" value="Genomic_DNA"/>
</dbReference>
<dbReference type="RefSeq" id="WP_024083452.1">
    <property type="nucleotide sequence ID" value="NC_007181.1"/>
</dbReference>
<dbReference type="SMR" id="Q9UWN6"/>
<dbReference type="STRING" id="330779.Saci_0866"/>
<dbReference type="GeneID" id="14551379"/>
<dbReference type="KEGG" id="sai:Saci_0866"/>
<dbReference type="PATRIC" id="fig|330779.12.peg.829"/>
<dbReference type="eggNOG" id="arCOG01981">
    <property type="taxonomic scope" value="Archaea"/>
</dbReference>
<dbReference type="HOGENOM" id="CLU_043736_0_1_2"/>
<dbReference type="Proteomes" id="UP000001018">
    <property type="component" value="Chromosome"/>
</dbReference>
<dbReference type="GO" id="GO:0097550">
    <property type="term" value="C:transcription preinitiation complex"/>
    <property type="evidence" value="ECO:0007669"/>
    <property type="project" value="TreeGrafter"/>
</dbReference>
<dbReference type="GO" id="GO:0003700">
    <property type="term" value="F:DNA-binding transcription factor activity"/>
    <property type="evidence" value="ECO:0007669"/>
    <property type="project" value="UniProtKB-UniRule"/>
</dbReference>
<dbReference type="GO" id="GO:0017025">
    <property type="term" value="F:TBP-class protein binding"/>
    <property type="evidence" value="ECO:0007669"/>
    <property type="project" value="InterPro"/>
</dbReference>
<dbReference type="GO" id="GO:0070897">
    <property type="term" value="P:transcription preinitiation complex assembly"/>
    <property type="evidence" value="ECO:0007669"/>
    <property type="project" value="InterPro"/>
</dbReference>
<dbReference type="CDD" id="cd20549">
    <property type="entry name" value="CYCLIN_TFIIB_archaea_like_rpt1"/>
    <property type="match status" value="1"/>
</dbReference>
<dbReference type="CDD" id="cd20550">
    <property type="entry name" value="CYCLIN_TFIIB_archaea_like_rpt2"/>
    <property type="match status" value="1"/>
</dbReference>
<dbReference type="FunFam" id="1.10.472.10:FF:000023">
    <property type="entry name" value="Transcription initiation factor IIB"/>
    <property type="match status" value="1"/>
</dbReference>
<dbReference type="FunFam" id="1.10.472.170:FF:000001">
    <property type="entry name" value="Transcription initiation factor IIB"/>
    <property type="match status" value="1"/>
</dbReference>
<dbReference type="Gene3D" id="1.10.472.170">
    <property type="match status" value="1"/>
</dbReference>
<dbReference type="Gene3D" id="1.10.472.10">
    <property type="entry name" value="Cyclin-like"/>
    <property type="match status" value="1"/>
</dbReference>
<dbReference type="HAMAP" id="MF_00383">
    <property type="entry name" value="TF2B_arch"/>
    <property type="match status" value="1"/>
</dbReference>
<dbReference type="InterPro" id="IPR013763">
    <property type="entry name" value="Cyclin-like_dom"/>
</dbReference>
<dbReference type="InterPro" id="IPR036915">
    <property type="entry name" value="Cyclin-like_sf"/>
</dbReference>
<dbReference type="InterPro" id="IPR000812">
    <property type="entry name" value="TFIIB"/>
</dbReference>
<dbReference type="InterPro" id="IPR023484">
    <property type="entry name" value="TFIIB_arc"/>
</dbReference>
<dbReference type="InterPro" id="IPR023486">
    <property type="entry name" value="TFIIB_CS"/>
</dbReference>
<dbReference type="InterPro" id="IPR013150">
    <property type="entry name" value="TFIIB_cyclin"/>
</dbReference>
<dbReference type="InterPro" id="IPR013137">
    <property type="entry name" value="Znf_TFIIB"/>
</dbReference>
<dbReference type="NCBIfam" id="NF001658">
    <property type="entry name" value="PRK00423.1"/>
    <property type="match status" value="1"/>
</dbReference>
<dbReference type="PANTHER" id="PTHR11618:SF13">
    <property type="entry name" value="TRANSCRIPTION INITIATION FACTOR IIB"/>
    <property type="match status" value="1"/>
</dbReference>
<dbReference type="PANTHER" id="PTHR11618">
    <property type="entry name" value="TRANSCRIPTION INITIATION FACTOR IIB-RELATED"/>
    <property type="match status" value="1"/>
</dbReference>
<dbReference type="Pfam" id="PF00382">
    <property type="entry name" value="TFIIB"/>
    <property type="match status" value="2"/>
</dbReference>
<dbReference type="Pfam" id="PF08271">
    <property type="entry name" value="Zn_Ribbon_TF"/>
    <property type="match status" value="1"/>
</dbReference>
<dbReference type="PRINTS" id="PR00685">
    <property type="entry name" value="TIFACTORIIB"/>
</dbReference>
<dbReference type="SMART" id="SM00385">
    <property type="entry name" value="CYCLIN"/>
    <property type="match status" value="2"/>
</dbReference>
<dbReference type="SUPFAM" id="SSF47954">
    <property type="entry name" value="Cyclin-like"/>
    <property type="match status" value="2"/>
</dbReference>
<dbReference type="SUPFAM" id="SSF57783">
    <property type="entry name" value="Zinc beta-ribbon"/>
    <property type="match status" value="1"/>
</dbReference>
<dbReference type="PROSITE" id="PS00782">
    <property type="entry name" value="TFIIB"/>
    <property type="match status" value="2"/>
</dbReference>
<feature type="chain" id="PRO_0000119333" description="Transcription initiation factor IIB">
    <location>
        <begin position="1"/>
        <end position="307"/>
    </location>
</feature>
<feature type="repeat" description="1">
    <location>
        <begin position="123"/>
        <end position="206"/>
    </location>
</feature>
<feature type="repeat" description="2">
    <location>
        <begin position="217"/>
        <end position="298"/>
    </location>
</feature>
<feature type="sequence conflict" description="In Ref. 1; AAF18139." evidence="2" ref="1">
    <original>Q</original>
    <variation>QLE</variation>
    <location>
        <position position="307"/>
    </location>
</feature>
<organism>
    <name type="scientific">Sulfolobus acidocaldarius (strain ATCC 33909 / DSM 639 / JCM 8929 / NBRC 15157 / NCIMB 11770)</name>
    <dbReference type="NCBI Taxonomy" id="330779"/>
    <lineage>
        <taxon>Archaea</taxon>
        <taxon>Thermoproteota</taxon>
        <taxon>Thermoprotei</taxon>
        <taxon>Sulfolobales</taxon>
        <taxon>Sulfolobaceae</taxon>
        <taxon>Sulfolobus</taxon>
    </lineage>
</organism>
<protein>
    <recommendedName>
        <fullName evidence="1">Transcription initiation factor IIB</fullName>
        <shortName evidence="1">TFIIB</shortName>
    </recommendedName>
</protein>
<comment type="function">
    <text evidence="1">Stabilizes TBP binding to an archaeal box-A promoter. Also responsible for recruiting RNA polymerase II to the pre-initiation complex (DNA-TBP-TFIIB).</text>
</comment>
<comment type="similarity">
    <text evidence="1">Belongs to the TFIIB family.</text>
</comment>
<comment type="sequence caution" evidence="2">
    <conflict type="erroneous initiation">
        <sequence resource="EMBL-CDS" id="AAY80233"/>
    </conflict>
</comment>
<keyword id="KW-1185">Reference proteome</keyword>
<keyword id="KW-0677">Repeat</keyword>
<keyword id="KW-0804">Transcription</keyword>
<keyword id="KW-0805">Transcription regulation</keyword>
<sequence>MVEQSKVPSSSLCPPDKIIFDEERGEYICTETGEVIEERIIDQGPEWRAFTPEEKEKRSRVGGPLNQTIHDMGISTVIDWKDKDAMGRSLDPKRRLEVLRWRKWQIRTRIQSSIDRNLAQAMNELERIGNLLNLPKAVKDEAALIYRKAVEKGLVRGRSIESVVAASIYAACRRMKMARTLDEIAQFTKANRKEVARCYRLILRELDIEVPVSDPKDYVTRIGTLLSLSGITMKHAAEIIEKAKNSGLTAGKDPAGLAAAAIYIAALLNDERRTQKEIAQVAGVTEVTVRNRYKELTQELKIQIPSQ</sequence>
<evidence type="ECO:0000255" key="1">
    <source>
        <dbReference type="HAMAP-Rule" id="MF_00383"/>
    </source>
</evidence>
<evidence type="ECO:0000305" key="2"/>
<name>TF2B_SULAC</name>
<proteinExistence type="inferred from homology"/>